<gene>
    <name evidence="1" type="primary">coaA</name>
    <name type="ordered locus">ECUMN_4500</name>
</gene>
<comment type="catalytic activity">
    <reaction evidence="1">
        <text>(R)-pantothenate + ATP = (R)-4'-phosphopantothenate + ADP + H(+)</text>
        <dbReference type="Rhea" id="RHEA:16373"/>
        <dbReference type="ChEBI" id="CHEBI:10986"/>
        <dbReference type="ChEBI" id="CHEBI:15378"/>
        <dbReference type="ChEBI" id="CHEBI:29032"/>
        <dbReference type="ChEBI" id="CHEBI:30616"/>
        <dbReference type="ChEBI" id="CHEBI:456216"/>
        <dbReference type="EC" id="2.7.1.33"/>
    </reaction>
</comment>
<comment type="pathway">
    <text evidence="1">Cofactor biosynthesis; coenzyme A biosynthesis; CoA from (R)-pantothenate: step 1/5.</text>
</comment>
<comment type="subcellular location">
    <subcellularLocation>
        <location evidence="1">Cytoplasm</location>
    </subcellularLocation>
</comment>
<comment type="similarity">
    <text evidence="1">Belongs to the prokaryotic pantothenate kinase family.</text>
</comment>
<proteinExistence type="inferred from homology"/>
<evidence type="ECO:0000255" key="1">
    <source>
        <dbReference type="HAMAP-Rule" id="MF_00215"/>
    </source>
</evidence>
<reference key="1">
    <citation type="journal article" date="2009" name="PLoS Genet.">
        <title>Organised genome dynamics in the Escherichia coli species results in highly diverse adaptive paths.</title>
        <authorList>
            <person name="Touchon M."/>
            <person name="Hoede C."/>
            <person name="Tenaillon O."/>
            <person name="Barbe V."/>
            <person name="Baeriswyl S."/>
            <person name="Bidet P."/>
            <person name="Bingen E."/>
            <person name="Bonacorsi S."/>
            <person name="Bouchier C."/>
            <person name="Bouvet O."/>
            <person name="Calteau A."/>
            <person name="Chiapello H."/>
            <person name="Clermont O."/>
            <person name="Cruveiller S."/>
            <person name="Danchin A."/>
            <person name="Diard M."/>
            <person name="Dossat C."/>
            <person name="Karoui M.E."/>
            <person name="Frapy E."/>
            <person name="Garry L."/>
            <person name="Ghigo J.M."/>
            <person name="Gilles A.M."/>
            <person name="Johnson J."/>
            <person name="Le Bouguenec C."/>
            <person name="Lescat M."/>
            <person name="Mangenot S."/>
            <person name="Martinez-Jehanne V."/>
            <person name="Matic I."/>
            <person name="Nassif X."/>
            <person name="Oztas S."/>
            <person name="Petit M.A."/>
            <person name="Pichon C."/>
            <person name="Rouy Z."/>
            <person name="Ruf C.S."/>
            <person name="Schneider D."/>
            <person name="Tourret J."/>
            <person name="Vacherie B."/>
            <person name="Vallenet D."/>
            <person name="Medigue C."/>
            <person name="Rocha E.P.C."/>
            <person name="Denamur E."/>
        </authorList>
    </citation>
    <scope>NUCLEOTIDE SEQUENCE [LARGE SCALE GENOMIC DNA]</scope>
    <source>
        <strain>UMN026 / ExPEC</strain>
    </source>
</reference>
<feature type="chain" id="PRO_1000189611" description="Pantothenate kinase">
    <location>
        <begin position="1"/>
        <end position="316"/>
    </location>
</feature>
<feature type="binding site" evidence="1">
    <location>
        <begin position="95"/>
        <end position="102"/>
    </location>
    <ligand>
        <name>ATP</name>
        <dbReference type="ChEBI" id="CHEBI:30616"/>
    </ligand>
</feature>
<keyword id="KW-0067">ATP-binding</keyword>
<keyword id="KW-0173">Coenzyme A biosynthesis</keyword>
<keyword id="KW-0963">Cytoplasm</keyword>
<keyword id="KW-0418">Kinase</keyword>
<keyword id="KW-0547">Nucleotide-binding</keyword>
<keyword id="KW-0808">Transferase</keyword>
<name>COAA_ECOLU</name>
<dbReference type="EC" id="2.7.1.33" evidence="1"/>
<dbReference type="EMBL" id="CU928163">
    <property type="protein sequence ID" value="CAR15626.1"/>
    <property type="molecule type" value="Genomic_DNA"/>
</dbReference>
<dbReference type="RefSeq" id="WP_000023085.1">
    <property type="nucleotide sequence ID" value="NC_011751.1"/>
</dbReference>
<dbReference type="RefSeq" id="YP_002415116.1">
    <property type="nucleotide sequence ID" value="NC_011751.1"/>
</dbReference>
<dbReference type="SMR" id="B7NFR9"/>
<dbReference type="STRING" id="585056.ECUMN_4500"/>
<dbReference type="KEGG" id="eum:ECUMN_4500"/>
<dbReference type="PATRIC" id="fig|585056.7.peg.4671"/>
<dbReference type="HOGENOM" id="CLU_053818_1_1_6"/>
<dbReference type="UniPathway" id="UPA00241">
    <property type="reaction ID" value="UER00352"/>
</dbReference>
<dbReference type="Proteomes" id="UP000007097">
    <property type="component" value="Chromosome"/>
</dbReference>
<dbReference type="GO" id="GO:0005737">
    <property type="term" value="C:cytoplasm"/>
    <property type="evidence" value="ECO:0007669"/>
    <property type="project" value="UniProtKB-SubCell"/>
</dbReference>
<dbReference type="GO" id="GO:0005524">
    <property type="term" value="F:ATP binding"/>
    <property type="evidence" value="ECO:0007669"/>
    <property type="project" value="UniProtKB-UniRule"/>
</dbReference>
<dbReference type="GO" id="GO:0004594">
    <property type="term" value="F:pantothenate kinase activity"/>
    <property type="evidence" value="ECO:0007669"/>
    <property type="project" value="UniProtKB-UniRule"/>
</dbReference>
<dbReference type="GO" id="GO:0015937">
    <property type="term" value="P:coenzyme A biosynthetic process"/>
    <property type="evidence" value="ECO:0007669"/>
    <property type="project" value="UniProtKB-UniRule"/>
</dbReference>
<dbReference type="CDD" id="cd02025">
    <property type="entry name" value="PanK"/>
    <property type="match status" value="1"/>
</dbReference>
<dbReference type="FunFam" id="3.40.50.300:FF:000242">
    <property type="entry name" value="Pantothenate kinase"/>
    <property type="match status" value="1"/>
</dbReference>
<dbReference type="Gene3D" id="3.40.50.300">
    <property type="entry name" value="P-loop containing nucleotide triphosphate hydrolases"/>
    <property type="match status" value="1"/>
</dbReference>
<dbReference type="HAMAP" id="MF_00215">
    <property type="entry name" value="Pantothen_kinase_1"/>
    <property type="match status" value="1"/>
</dbReference>
<dbReference type="InterPro" id="IPR027417">
    <property type="entry name" value="P-loop_NTPase"/>
</dbReference>
<dbReference type="InterPro" id="IPR004566">
    <property type="entry name" value="PanK"/>
</dbReference>
<dbReference type="InterPro" id="IPR006083">
    <property type="entry name" value="PRK/URK"/>
</dbReference>
<dbReference type="NCBIfam" id="TIGR00554">
    <property type="entry name" value="panK_bact"/>
    <property type="match status" value="1"/>
</dbReference>
<dbReference type="PANTHER" id="PTHR10285">
    <property type="entry name" value="URIDINE KINASE"/>
    <property type="match status" value="1"/>
</dbReference>
<dbReference type="Pfam" id="PF00485">
    <property type="entry name" value="PRK"/>
    <property type="match status" value="1"/>
</dbReference>
<dbReference type="PIRSF" id="PIRSF000545">
    <property type="entry name" value="Pantothenate_kin"/>
    <property type="match status" value="1"/>
</dbReference>
<dbReference type="SUPFAM" id="SSF52540">
    <property type="entry name" value="P-loop containing nucleoside triphosphate hydrolases"/>
    <property type="match status" value="1"/>
</dbReference>
<protein>
    <recommendedName>
        <fullName evidence="1">Pantothenate kinase</fullName>
        <ecNumber evidence="1">2.7.1.33</ecNumber>
    </recommendedName>
    <alternativeName>
        <fullName evidence="1">Pantothenic acid kinase</fullName>
    </alternativeName>
</protein>
<organism>
    <name type="scientific">Escherichia coli O17:K52:H18 (strain UMN026 / ExPEC)</name>
    <dbReference type="NCBI Taxonomy" id="585056"/>
    <lineage>
        <taxon>Bacteria</taxon>
        <taxon>Pseudomonadati</taxon>
        <taxon>Pseudomonadota</taxon>
        <taxon>Gammaproteobacteria</taxon>
        <taxon>Enterobacterales</taxon>
        <taxon>Enterobacteriaceae</taxon>
        <taxon>Escherichia</taxon>
    </lineage>
</organism>
<sequence length="316" mass="36346">MSIKEQTLMTPYLQFDRNQWAALRDSVPMTLSEDEIARLKGINEDLSLEEVAEIYLPLSRLLNFYISSNLRRQAVLEQFLGTNGQRIPYIISIAGSVAVGKSTTARVLQALLSRWPEHRRVELITTDGFLHPNQVLKERGLMKKKGFPESYDMHRLVKFVSDLKSGVPNVTAPVYSHLIYDVIPDGDKTVVQPDILILEGLNVLQSGMDYPHDPHHVFVSDFVDFSIYVDAPEDLLQTWYINRFLKFREGAFTDPDSYFHNYAKLTKEEAINTAMTLWKEINWLNLKQNILPTRERASLILTKSANHAVEEVRLRK</sequence>
<accession>B7NFR9</accession>